<accession>Q1Q893</accession>
<comment type="function">
    <text evidence="1">Key component of the proton channel; it plays a direct role in the translocation of protons across the membrane.</text>
</comment>
<comment type="subunit">
    <text evidence="1">F-type ATPases have 2 components, CF(1) - the catalytic core - and CF(0) - the membrane proton channel. CF(1) has five subunits: alpha(3), beta(3), gamma(1), delta(1), epsilon(1). CF(0) has three main subunits: a(1), b(2) and c(9-12). The alpha and beta chains form an alternating ring which encloses part of the gamma chain. CF(1) is attached to CF(0) by a central stalk formed by the gamma and epsilon chains, while a peripheral stalk is formed by the delta and b chains.</text>
</comment>
<comment type="subcellular location">
    <subcellularLocation>
        <location evidence="1">Cell inner membrane</location>
        <topology evidence="1">Multi-pass membrane protein</topology>
    </subcellularLocation>
</comment>
<comment type="similarity">
    <text evidence="1">Belongs to the ATPase A chain family.</text>
</comment>
<sequence length="288" mass="32158">MAGEQTTTEYISHHLTNWTYGYLPGEGWKVAYNAEEASAMGFKAIHLDSMLWSIGLGIVFCAIFWMVARKVTSGVPGKTQAAVEMIVEFVDNNVRDSYSGTSKLIAPLALTIFVWIFLMNLMDLLPVDFIPMIAGQIGALMGHDPHHVYFKIVPTTDPNITLGMSFSVFILILFYSIKEKGLGGFVGELTLHPFSAKNPIVQIILIPINFILEFVTLIAKPISLGLRLFGNMYAGELIFILIALMPFWIQWALSVPWAIFHILIITLQAFVFMMLTIVYMSLASSTEH</sequence>
<protein>
    <recommendedName>
        <fullName evidence="1">ATP synthase subunit a</fullName>
    </recommendedName>
    <alternativeName>
        <fullName evidence="1">ATP synthase F0 sector subunit a</fullName>
    </alternativeName>
    <alternativeName>
        <fullName evidence="1">F-ATPase subunit 6</fullName>
    </alternativeName>
</protein>
<dbReference type="EMBL" id="CP000323">
    <property type="protein sequence ID" value="ABE76110.1"/>
    <property type="molecule type" value="Genomic_DNA"/>
</dbReference>
<dbReference type="RefSeq" id="WP_011514638.1">
    <property type="nucleotide sequence ID" value="NC_007969.1"/>
</dbReference>
<dbReference type="SMR" id="Q1Q893"/>
<dbReference type="STRING" id="335284.Pcryo_2333"/>
<dbReference type="KEGG" id="pcr:Pcryo_2333"/>
<dbReference type="eggNOG" id="COG0356">
    <property type="taxonomic scope" value="Bacteria"/>
</dbReference>
<dbReference type="HOGENOM" id="CLU_041018_1_0_6"/>
<dbReference type="Proteomes" id="UP000002425">
    <property type="component" value="Chromosome"/>
</dbReference>
<dbReference type="GO" id="GO:0005886">
    <property type="term" value="C:plasma membrane"/>
    <property type="evidence" value="ECO:0007669"/>
    <property type="project" value="UniProtKB-SubCell"/>
</dbReference>
<dbReference type="GO" id="GO:0045259">
    <property type="term" value="C:proton-transporting ATP synthase complex"/>
    <property type="evidence" value="ECO:0007669"/>
    <property type="project" value="UniProtKB-KW"/>
</dbReference>
<dbReference type="GO" id="GO:0046933">
    <property type="term" value="F:proton-transporting ATP synthase activity, rotational mechanism"/>
    <property type="evidence" value="ECO:0007669"/>
    <property type="project" value="UniProtKB-UniRule"/>
</dbReference>
<dbReference type="GO" id="GO:0042777">
    <property type="term" value="P:proton motive force-driven plasma membrane ATP synthesis"/>
    <property type="evidence" value="ECO:0007669"/>
    <property type="project" value="TreeGrafter"/>
</dbReference>
<dbReference type="CDD" id="cd00310">
    <property type="entry name" value="ATP-synt_Fo_a_6"/>
    <property type="match status" value="1"/>
</dbReference>
<dbReference type="FunFam" id="1.20.120.220:FF:000002">
    <property type="entry name" value="ATP synthase subunit a"/>
    <property type="match status" value="1"/>
</dbReference>
<dbReference type="Gene3D" id="1.20.120.220">
    <property type="entry name" value="ATP synthase, F0 complex, subunit A"/>
    <property type="match status" value="1"/>
</dbReference>
<dbReference type="HAMAP" id="MF_01393">
    <property type="entry name" value="ATP_synth_a_bact"/>
    <property type="match status" value="1"/>
</dbReference>
<dbReference type="InterPro" id="IPR045082">
    <property type="entry name" value="ATP_syn_F0_a_bact/chloroplast"/>
</dbReference>
<dbReference type="InterPro" id="IPR000568">
    <property type="entry name" value="ATP_synth_F0_asu"/>
</dbReference>
<dbReference type="InterPro" id="IPR023011">
    <property type="entry name" value="ATP_synth_F0_asu_AS"/>
</dbReference>
<dbReference type="InterPro" id="IPR035908">
    <property type="entry name" value="F0_ATP_A_sf"/>
</dbReference>
<dbReference type="NCBIfam" id="TIGR01131">
    <property type="entry name" value="ATP_synt_6_or_A"/>
    <property type="match status" value="1"/>
</dbReference>
<dbReference type="NCBIfam" id="NF004477">
    <property type="entry name" value="PRK05815.1-1"/>
    <property type="match status" value="1"/>
</dbReference>
<dbReference type="PANTHER" id="PTHR42823">
    <property type="entry name" value="ATP SYNTHASE SUBUNIT A, CHLOROPLASTIC"/>
    <property type="match status" value="1"/>
</dbReference>
<dbReference type="PANTHER" id="PTHR42823:SF3">
    <property type="entry name" value="ATP SYNTHASE SUBUNIT A, CHLOROPLASTIC"/>
    <property type="match status" value="1"/>
</dbReference>
<dbReference type="Pfam" id="PF00119">
    <property type="entry name" value="ATP-synt_A"/>
    <property type="match status" value="1"/>
</dbReference>
<dbReference type="SUPFAM" id="SSF81336">
    <property type="entry name" value="F1F0 ATP synthase subunit A"/>
    <property type="match status" value="1"/>
</dbReference>
<dbReference type="PROSITE" id="PS00449">
    <property type="entry name" value="ATPASE_A"/>
    <property type="match status" value="1"/>
</dbReference>
<feature type="chain" id="PRO_0000362405" description="ATP synthase subunit a">
    <location>
        <begin position="1"/>
        <end position="288"/>
    </location>
</feature>
<feature type="transmembrane region" description="Helical" evidence="1">
    <location>
        <begin position="47"/>
        <end position="67"/>
    </location>
</feature>
<feature type="transmembrane region" description="Helical" evidence="1">
    <location>
        <begin position="104"/>
        <end position="124"/>
    </location>
</feature>
<feature type="transmembrane region" description="Helical" evidence="1">
    <location>
        <begin position="157"/>
        <end position="177"/>
    </location>
</feature>
<feature type="transmembrane region" description="Helical" evidence="1">
    <location>
        <begin position="199"/>
        <end position="219"/>
    </location>
</feature>
<feature type="transmembrane region" description="Helical" evidence="1">
    <location>
        <begin position="237"/>
        <end position="257"/>
    </location>
</feature>
<feature type="transmembrane region" description="Helical" evidence="1">
    <location>
        <begin position="258"/>
        <end position="278"/>
    </location>
</feature>
<gene>
    <name evidence="1" type="primary">atpB</name>
    <name type="ordered locus">Pcryo_2333</name>
</gene>
<keyword id="KW-0066">ATP synthesis</keyword>
<keyword id="KW-0997">Cell inner membrane</keyword>
<keyword id="KW-1003">Cell membrane</keyword>
<keyword id="KW-0138">CF(0)</keyword>
<keyword id="KW-0375">Hydrogen ion transport</keyword>
<keyword id="KW-0406">Ion transport</keyword>
<keyword id="KW-0472">Membrane</keyword>
<keyword id="KW-0812">Transmembrane</keyword>
<keyword id="KW-1133">Transmembrane helix</keyword>
<keyword id="KW-0813">Transport</keyword>
<proteinExistence type="inferred from homology"/>
<evidence type="ECO:0000255" key="1">
    <source>
        <dbReference type="HAMAP-Rule" id="MF_01393"/>
    </source>
</evidence>
<organism>
    <name type="scientific">Psychrobacter cryohalolentis (strain ATCC BAA-1226 / DSM 17306 / VKM B-2378 / K5)</name>
    <dbReference type="NCBI Taxonomy" id="335284"/>
    <lineage>
        <taxon>Bacteria</taxon>
        <taxon>Pseudomonadati</taxon>
        <taxon>Pseudomonadota</taxon>
        <taxon>Gammaproteobacteria</taxon>
        <taxon>Moraxellales</taxon>
        <taxon>Moraxellaceae</taxon>
        <taxon>Psychrobacter</taxon>
    </lineage>
</organism>
<name>ATP6_PSYCK</name>
<reference key="1">
    <citation type="submission" date="2006-03" db="EMBL/GenBank/DDBJ databases">
        <title>Complete sequence of chromosome of Psychrobacter cryohalolentis K5.</title>
        <authorList>
            <consortium name="US DOE Joint Genome Institute"/>
            <person name="Copeland A."/>
            <person name="Lucas S."/>
            <person name="Lapidus A."/>
            <person name="Barry K."/>
            <person name="Detter J.C."/>
            <person name="Glavina T."/>
            <person name="Hammon N."/>
            <person name="Israni S."/>
            <person name="Dalin E."/>
            <person name="Tice H."/>
            <person name="Pitluck S."/>
            <person name="Brettin T."/>
            <person name="Bruce D."/>
            <person name="Han C."/>
            <person name="Tapia R."/>
            <person name="Sims D.R."/>
            <person name="Gilna P."/>
            <person name="Schmutz J."/>
            <person name="Larimer F."/>
            <person name="Land M."/>
            <person name="Hauser L."/>
            <person name="Kyrpides N."/>
            <person name="Kim E."/>
            <person name="Richardson P."/>
        </authorList>
    </citation>
    <scope>NUCLEOTIDE SEQUENCE [LARGE SCALE GENOMIC DNA]</scope>
    <source>
        <strain>ATCC BAA-1226 / DSM 17306 / VKM B-2378 / K5</strain>
    </source>
</reference>